<comment type="function">
    <text evidence="1">Catalyzes a salvage reaction resulting in the formation of AMP, that is energically less costly than de novo synthesis.</text>
</comment>
<comment type="catalytic activity">
    <reaction evidence="1">
        <text>AMP + diphosphate = 5-phospho-alpha-D-ribose 1-diphosphate + adenine</text>
        <dbReference type="Rhea" id="RHEA:16609"/>
        <dbReference type="ChEBI" id="CHEBI:16708"/>
        <dbReference type="ChEBI" id="CHEBI:33019"/>
        <dbReference type="ChEBI" id="CHEBI:58017"/>
        <dbReference type="ChEBI" id="CHEBI:456215"/>
        <dbReference type="EC" id="2.4.2.7"/>
    </reaction>
</comment>
<comment type="pathway">
    <text evidence="1">Purine metabolism; AMP biosynthesis via salvage pathway; AMP from adenine: step 1/1.</text>
</comment>
<comment type="subunit">
    <text evidence="1">Homodimer.</text>
</comment>
<comment type="subcellular location">
    <subcellularLocation>
        <location evidence="1">Cytoplasm</location>
    </subcellularLocation>
</comment>
<comment type="similarity">
    <text evidence="1">Belongs to the purine/pyrimidine phosphoribosyltransferase family.</text>
</comment>
<keyword id="KW-0963">Cytoplasm</keyword>
<keyword id="KW-0328">Glycosyltransferase</keyword>
<keyword id="KW-0660">Purine salvage</keyword>
<keyword id="KW-1185">Reference proteome</keyword>
<keyword id="KW-0808">Transferase</keyword>
<proteinExistence type="inferred from homology"/>
<feature type="chain" id="PRO_0000149375" description="Adenine phosphoribosyltransferase">
    <location>
        <begin position="1"/>
        <end position="172"/>
    </location>
</feature>
<accession>Q892A7</accession>
<organism>
    <name type="scientific">Clostridium tetani (strain Massachusetts / E88)</name>
    <dbReference type="NCBI Taxonomy" id="212717"/>
    <lineage>
        <taxon>Bacteria</taxon>
        <taxon>Bacillati</taxon>
        <taxon>Bacillota</taxon>
        <taxon>Clostridia</taxon>
        <taxon>Eubacteriales</taxon>
        <taxon>Clostridiaceae</taxon>
        <taxon>Clostridium</taxon>
    </lineage>
</organism>
<evidence type="ECO:0000255" key="1">
    <source>
        <dbReference type="HAMAP-Rule" id="MF_00004"/>
    </source>
</evidence>
<protein>
    <recommendedName>
        <fullName evidence="1">Adenine phosphoribosyltransferase</fullName>
        <shortName evidence="1">APRT</shortName>
        <ecNumber evidence="1">2.4.2.7</ecNumber>
    </recommendedName>
</protein>
<reference key="1">
    <citation type="journal article" date="2003" name="Proc. Natl. Acad. Sci. U.S.A.">
        <title>The genome sequence of Clostridium tetani, the causative agent of tetanus disease.</title>
        <authorList>
            <person name="Brueggemann H."/>
            <person name="Baeumer S."/>
            <person name="Fricke W.F."/>
            <person name="Wiezer A."/>
            <person name="Liesegang H."/>
            <person name="Decker I."/>
            <person name="Herzberg C."/>
            <person name="Martinez-Arias R."/>
            <person name="Merkl R."/>
            <person name="Henne A."/>
            <person name="Gottschalk G."/>
        </authorList>
    </citation>
    <scope>NUCLEOTIDE SEQUENCE [LARGE SCALE GENOMIC DNA]</scope>
    <source>
        <strain>Massachusetts / E88</strain>
    </source>
</reference>
<dbReference type="EC" id="2.4.2.7" evidence="1"/>
<dbReference type="EMBL" id="AE015927">
    <property type="protein sequence ID" value="AAO36688.1"/>
    <property type="molecule type" value="Genomic_DNA"/>
</dbReference>
<dbReference type="RefSeq" id="WP_011100349.1">
    <property type="nucleotide sequence ID" value="NC_004557.1"/>
</dbReference>
<dbReference type="SMR" id="Q892A7"/>
<dbReference type="STRING" id="212717.CTC_02200"/>
<dbReference type="GeneID" id="24254009"/>
<dbReference type="KEGG" id="ctc:CTC_02200"/>
<dbReference type="HOGENOM" id="CLU_063339_3_0_9"/>
<dbReference type="OrthoDB" id="9803963at2"/>
<dbReference type="UniPathway" id="UPA00588">
    <property type="reaction ID" value="UER00646"/>
</dbReference>
<dbReference type="Proteomes" id="UP000001412">
    <property type="component" value="Chromosome"/>
</dbReference>
<dbReference type="GO" id="GO:0005737">
    <property type="term" value="C:cytoplasm"/>
    <property type="evidence" value="ECO:0007669"/>
    <property type="project" value="UniProtKB-SubCell"/>
</dbReference>
<dbReference type="GO" id="GO:0002055">
    <property type="term" value="F:adenine binding"/>
    <property type="evidence" value="ECO:0007669"/>
    <property type="project" value="TreeGrafter"/>
</dbReference>
<dbReference type="GO" id="GO:0003999">
    <property type="term" value="F:adenine phosphoribosyltransferase activity"/>
    <property type="evidence" value="ECO:0007669"/>
    <property type="project" value="UniProtKB-UniRule"/>
</dbReference>
<dbReference type="GO" id="GO:0016208">
    <property type="term" value="F:AMP binding"/>
    <property type="evidence" value="ECO:0007669"/>
    <property type="project" value="TreeGrafter"/>
</dbReference>
<dbReference type="GO" id="GO:0006168">
    <property type="term" value="P:adenine salvage"/>
    <property type="evidence" value="ECO:0007669"/>
    <property type="project" value="InterPro"/>
</dbReference>
<dbReference type="GO" id="GO:0044209">
    <property type="term" value="P:AMP salvage"/>
    <property type="evidence" value="ECO:0007669"/>
    <property type="project" value="UniProtKB-UniRule"/>
</dbReference>
<dbReference type="GO" id="GO:0006166">
    <property type="term" value="P:purine ribonucleoside salvage"/>
    <property type="evidence" value="ECO:0007669"/>
    <property type="project" value="UniProtKB-KW"/>
</dbReference>
<dbReference type="CDD" id="cd06223">
    <property type="entry name" value="PRTases_typeI"/>
    <property type="match status" value="1"/>
</dbReference>
<dbReference type="FunFam" id="3.40.50.2020:FF:000004">
    <property type="entry name" value="Adenine phosphoribosyltransferase"/>
    <property type="match status" value="1"/>
</dbReference>
<dbReference type="Gene3D" id="3.40.50.2020">
    <property type="match status" value="1"/>
</dbReference>
<dbReference type="HAMAP" id="MF_00004">
    <property type="entry name" value="Aden_phosphoribosyltr"/>
    <property type="match status" value="1"/>
</dbReference>
<dbReference type="InterPro" id="IPR005764">
    <property type="entry name" value="Ade_phspho_trans"/>
</dbReference>
<dbReference type="InterPro" id="IPR000836">
    <property type="entry name" value="PRibTrfase_dom"/>
</dbReference>
<dbReference type="InterPro" id="IPR029057">
    <property type="entry name" value="PRTase-like"/>
</dbReference>
<dbReference type="InterPro" id="IPR050054">
    <property type="entry name" value="UPRTase/APRTase"/>
</dbReference>
<dbReference type="NCBIfam" id="TIGR01090">
    <property type="entry name" value="apt"/>
    <property type="match status" value="1"/>
</dbReference>
<dbReference type="NCBIfam" id="NF002633">
    <property type="entry name" value="PRK02304.1-2"/>
    <property type="match status" value="1"/>
</dbReference>
<dbReference type="NCBIfam" id="NF002634">
    <property type="entry name" value="PRK02304.1-3"/>
    <property type="match status" value="1"/>
</dbReference>
<dbReference type="NCBIfam" id="NF002636">
    <property type="entry name" value="PRK02304.1-5"/>
    <property type="match status" value="1"/>
</dbReference>
<dbReference type="PANTHER" id="PTHR32315">
    <property type="entry name" value="ADENINE PHOSPHORIBOSYLTRANSFERASE"/>
    <property type="match status" value="1"/>
</dbReference>
<dbReference type="PANTHER" id="PTHR32315:SF3">
    <property type="entry name" value="ADENINE PHOSPHORIBOSYLTRANSFERASE"/>
    <property type="match status" value="1"/>
</dbReference>
<dbReference type="Pfam" id="PF00156">
    <property type="entry name" value="Pribosyltran"/>
    <property type="match status" value="1"/>
</dbReference>
<dbReference type="SUPFAM" id="SSF53271">
    <property type="entry name" value="PRTase-like"/>
    <property type="match status" value="1"/>
</dbReference>
<sequence>MDLKDKIRVIQGFPKEGISFKDVTTILQEKEAFKYTIDTLVEELKDKNVDVVVGPEARGFLFGAPLAYALGAGFVPVRKKGKLPSTTISSKYELEYGSDELEMHKDSIKPGQRVVIADDLLATGGTICSVIEMIESLGGEIVSINFLIELTDLKGREKLGKYDISSLVQYDI</sequence>
<name>APT_CLOTE</name>
<gene>
    <name evidence="1" type="primary">apt</name>
    <name type="ordered locus">CTC_02200</name>
</gene>